<evidence type="ECO:0000255" key="1">
    <source>
        <dbReference type="HAMAP-Rule" id="MF_00361"/>
    </source>
</evidence>
<feature type="chain" id="PRO_1000133560" description="NAD kinase">
    <location>
        <begin position="1"/>
        <end position="292"/>
    </location>
</feature>
<feature type="active site" description="Proton acceptor" evidence="1">
    <location>
        <position position="73"/>
    </location>
</feature>
<feature type="binding site" evidence="1">
    <location>
        <begin position="73"/>
        <end position="74"/>
    </location>
    <ligand>
        <name>NAD(+)</name>
        <dbReference type="ChEBI" id="CHEBI:57540"/>
    </ligand>
</feature>
<feature type="binding site" evidence="1">
    <location>
        <begin position="147"/>
        <end position="148"/>
    </location>
    <ligand>
        <name>NAD(+)</name>
        <dbReference type="ChEBI" id="CHEBI:57540"/>
    </ligand>
</feature>
<feature type="binding site" evidence="1">
    <location>
        <position position="158"/>
    </location>
    <ligand>
        <name>NAD(+)</name>
        <dbReference type="ChEBI" id="CHEBI:57540"/>
    </ligand>
</feature>
<feature type="binding site" evidence="1">
    <location>
        <position position="175"/>
    </location>
    <ligand>
        <name>NAD(+)</name>
        <dbReference type="ChEBI" id="CHEBI:57540"/>
    </ligand>
</feature>
<feature type="binding site" evidence="1">
    <location>
        <position position="177"/>
    </location>
    <ligand>
        <name>NAD(+)</name>
        <dbReference type="ChEBI" id="CHEBI:57540"/>
    </ligand>
</feature>
<feature type="binding site" evidence="1">
    <location>
        <begin position="188"/>
        <end position="193"/>
    </location>
    <ligand>
        <name>NAD(+)</name>
        <dbReference type="ChEBI" id="CHEBI:57540"/>
    </ligand>
</feature>
<feature type="binding site" evidence="1">
    <location>
        <position position="247"/>
    </location>
    <ligand>
        <name>NAD(+)</name>
        <dbReference type="ChEBI" id="CHEBI:57540"/>
    </ligand>
</feature>
<proteinExistence type="inferred from homology"/>
<gene>
    <name evidence="1" type="primary">nadK</name>
    <name type="ordered locus">BUAPTUC7_183</name>
</gene>
<accession>B8D789</accession>
<name>NADK_BUCAT</name>
<sequence length="292" mass="32576">MKQHFTCIGIVGRPRHDSALITHKTLYEWLIKNGYKVFIEHTVARELKLNNPNTATLIEIGEFCDLAVVIGGDGNLLCAARVLSFYNIKIIGINRGNLGFLADLNPDTGLKKLSEVLSGNYSLENRFLLDAQVCQKKIISRSSIAINEVVLHTKNLAHMIEFEVYIDNKFSFSQRADGLIVSTPTGSTGYSLSAGGPIIAASLDAIVLVPMFPHTLSARPLVIHSDSIICLKFSNIQTNLKISCDSQIILTIKKGECVFIRRSCYYLNLIHPKSYNYFKTLTSKLSWSKKFF</sequence>
<dbReference type="EC" id="2.7.1.23" evidence="1"/>
<dbReference type="EMBL" id="CP001158">
    <property type="protein sequence ID" value="ACL30004.1"/>
    <property type="molecule type" value="Genomic_DNA"/>
</dbReference>
<dbReference type="RefSeq" id="WP_009874142.1">
    <property type="nucleotide sequence ID" value="NC_011834.1"/>
</dbReference>
<dbReference type="SMR" id="B8D789"/>
<dbReference type="KEGG" id="bau:BUAPTUC7_183"/>
<dbReference type="HOGENOM" id="CLU_008831_0_1_6"/>
<dbReference type="GO" id="GO:0005737">
    <property type="term" value="C:cytoplasm"/>
    <property type="evidence" value="ECO:0007669"/>
    <property type="project" value="UniProtKB-SubCell"/>
</dbReference>
<dbReference type="GO" id="GO:0005524">
    <property type="term" value="F:ATP binding"/>
    <property type="evidence" value="ECO:0007669"/>
    <property type="project" value="UniProtKB-KW"/>
</dbReference>
<dbReference type="GO" id="GO:0046872">
    <property type="term" value="F:metal ion binding"/>
    <property type="evidence" value="ECO:0007669"/>
    <property type="project" value="UniProtKB-UniRule"/>
</dbReference>
<dbReference type="GO" id="GO:0051287">
    <property type="term" value="F:NAD binding"/>
    <property type="evidence" value="ECO:0007669"/>
    <property type="project" value="UniProtKB-ARBA"/>
</dbReference>
<dbReference type="GO" id="GO:0003951">
    <property type="term" value="F:NAD+ kinase activity"/>
    <property type="evidence" value="ECO:0007669"/>
    <property type="project" value="UniProtKB-UniRule"/>
</dbReference>
<dbReference type="GO" id="GO:0019674">
    <property type="term" value="P:NAD metabolic process"/>
    <property type="evidence" value="ECO:0007669"/>
    <property type="project" value="InterPro"/>
</dbReference>
<dbReference type="GO" id="GO:0006741">
    <property type="term" value="P:NADP biosynthetic process"/>
    <property type="evidence" value="ECO:0007669"/>
    <property type="project" value="UniProtKB-UniRule"/>
</dbReference>
<dbReference type="FunFam" id="2.60.200.30:FF:000001">
    <property type="entry name" value="NAD kinase"/>
    <property type="match status" value="1"/>
</dbReference>
<dbReference type="Gene3D" id="3.40.50.10330">
    <property type="entry name" value="Probable inorganic polyphosphate/atp-NAD kinase, domain 1"/>
    <property type="match status" value="1"/>
</dbReference>
<dbReference type="Gene3D" id="2.60.200.30">
    <property type="entry name" value="Probable inorganic polyphosphate/atp-NAD kinase, domain 2"/>
    <property type="match status" value="1"/>
</dbReference>
<dbReference type="HAMAP" id="MF_00361">
    <property type="entry name" value="NAD_kinase"/>
    <property type="match status" value="1"/>
</dbReference>
<dbReference type="InterPro" id="IPR017438">
    <property type="entry name" value="ATP-NAD_kinase_N"/>
</dbReference>
<dbReference type="InterPro" id="IPR017437">
    <property type="entry name" value="ATP-NAD_kinase_PpnK-typ_C"/>
</dbReference>
<dbReference type="InterPro" id="IPR016064">
    <property type="entry name" value="NAD/diacylglycerol_kinase_sf"/>
</dbReference>
<dbReference type="InterPro" id="IPR002504">
    <property type="entry name" value="NADK"/>
</dbReference>
<dbReference type="NCBIfam" id="NF002306">
    <property type="entry name" value="PRK01231.1"/>
    <property type="match status" value="1"/>
</dbReference>
<dbReference type="NCBIfam" id="NF002893">
    <property type="entry name" value="PRK03378.1"/>
    <property type="match status" value="1"/>
</dbReference>
<dbReference type="PANTHER" id="PTHR20275">
    <property type="entry name" value="NAD KINASE"/>
    <property type="match status" value="1"/>
</dbReference>
<dbReference type="PANTHER" id="PTHR20275:SF0">
    <property type="entry name" value="NAD KINASE"/>
    <property type="match status" value="1"/>
</dbReference>
<dbReference type="Pfam" id="PF01513">
    <property type="entry name" value="NAD_kinase"/>
    <property type="match status" value="1"/>
</dbReference>
<dbReference type="Pfam" id="PF20143">
    <property type="entry name" value="NAD_kinase_C"/>
    <property type="match status" value="1"/>
</dbReference>
<dbReference type="SUPFAM" id="SSF111331">
    <property type="entry name" value="NAD kinase/diacylglycerol kinase-like"/>
    <property type="match status" value="1"/>
</dbReference>
<comment type="function">
    <text evidence="1">Involved in the regulation of the intracellular balance of NAD and NADP, and is a key enzyme in the biosynthesis of NADP. Catalyzes specifically the phosphorylation on 2'-hydroxyl of the adenosine moiety of NAD to yield NADP.</text>
</comment>
<comment type="catalytic activity">
    <reaction evidence="1">
        <text>NAD(+) + ATP = ADP + NADP(+) + H(+)</text>
        <dbReference type="Rhea" id="RHEA:18629"/>
        <dbReference type="ChEBI" id="CHEBI:15378"/>
        <dbReference type="ChEBI" id="CHEBI:30616"/>
        <dbReference type="ChEBI" id="CHEBI:57540"/>
        <dbReference type="ChEBI" id="CHEBI:58349"/>
        <dbReference type="ChEBI" id="CHEBI:456216"/>
        <dbReference type="EC" id="2.7.1.23"/>
    </reaction>
</comment>
<comment type="cofactor">
    <cofactor evidence="1">
        <name>a divalent metal cation</name>
        <dbReference type="ChEBI" id="CHEBI:60240"/>
    </cofactor>
</comment>
<comment type="subcellular location">
    <subcellularLocation>
        <location evidence="1">Cytoplasm</location>
    </subcellularLocation>
</comment>
<comment type="similarity">
    <text evidence="1">Belongs to the NAD kinase family.</text>
</comment>
<keyword id="KW-0067">ATP-binding</keyword>
<keyword id="KW-0963">Cytoplasm</keyword>
<keyword id="KW-0418">Kinase</keyword>
<keyword id="KW-0520">NAD</keyword>
<keyword id="KW-0521">NADP</keyword>
<keyword id="KW-0547">Nucleotide-binding</keyword>
<keyword id="KW-0808">Transferase</keyword>
<reference key="1">
    <citation type="journal article" date="2009" name="Science">
        <title>The dynamics and time scale of ongoing genomic erosion in symbiotic bacteria.</title>
        <authorList>
            <person name="Moran N.A."/>
            <person name="McLaughlin H.J."/>
            <person name="Sorek R."/>
        </authorList>
    </citation>
    <scope>NUCLEOTIDE SEQUENCE [LARGE SCALE GENOMIC DNA]</scope>
    <source>
        <strain>Tuc7</strain>
    </source>
</reference>
<organism>
    <name type="scientific">Buchnera aphidicola subsp. Acyrthosiphon pisum (strain Tuc7)</name>
    <dbReference type="NCBI Taxonomy" id="561501"/>
    <lineage>
        <taxon>Bacteria</taxon>
        <taxon>Pseudomonadati</taxon>
        <taxon>Pseudomonadota</taxon>
        <taxon>Gammaproteobacteria</taxon>
        <taxon>Enterobacterales</taxon>
        <taxon>Erwiniaceae</taxon>
        <taxon>Buchnera</taxon>
    </lineage>
</organism>
<protein>
    <recommendedName>
        <fullName evidence="1">NAD kinase</fullName>
        <ecNumber evidence="1">2.7.1.23</ecNumber>
    </recommendedName>
    <alternativeName>
        <fullName evidence="1">ATP-dependent NAD kinase</fullName>
    </alternativeName>
</protein>